<proteinExistence type="inferred from homology"/>
<evidence type="ECO:0000255" key="1">
    <source>
        <dbReference type="HAMAP-Rule" id="MF_01307"/>
    </source>
</evidence>
<evidence type="ECO:0000305" key="2"/>
<dbReference type="EMBL" id="CR936503">
    <property type="protein sequence ID" value="CAI56056.1"/>
    <property type="molecule type" value="Genomic_DNA"/>
</dbReference>
<dbReference type="RefSeq" id="WP_011375437.1">
    <property type="nucleotide sequence ID" value="NC_007576.1"/>
</dbReference>
<dbReference type="SMR" id="Q38US8"/>
<dbReference type="STRING" id="314315.LCA_1748"/>
<dbReference type="GeneID" id="57132664"/>
<dbReference type="KEGG" id="lsa:LCA_1748"/>
<dbReference type="eggNOG" id="COG0098">
    <property type="taxonomic scope" value="Bacteria"/>
</dbReference>
<dbReference type="HOGENOM" id="CLU_065898_2_2_9"/>
<dbReference type="OrthoDB" id="9809045at2"/>
<dbReference type="Proteomes" id="UP000002707">
    <property type="component" value="Chromosome"/>
</dbReference>
<dbReference type="GO" id="GO:0015935">
    <property type="term" value="C:small ribosomal subunit"/>
    <property type="evidence" value="ECO:0007669"/>
    <property type="project" value="InterPro"/>
</dbReference>
<dbReference type="GO" id="GO:0019843">
    <property type="term" value="F:rRNA binding"/>
    <property type="evidence" value="ECO:0007669"/>
    <property type="project" value="UniProtKB-UniRule"/>
</dbReference>
<dbReference type="GO" id="GO:0003735">
    <property type="term" value="F:structural constituent of ribosome"/>
    <property type="evidence" value="ECO:0007669"/>
    <property type="project" value="InterPro"/>
</dbReference>
<dbReference type="GO" id="GO:0006412">
    <property type="term" value="P:translation"/>
    <property type="evidence" value="ECO:0007669"/>
    <property type="project" value="UniProtKB-UniRule"/>
</dbReference>
<dbReference type="FunFam" id="3.30.160.20:FF:000001">
    <property type="entry name" value="30S ribosomal protein S5"/>
    <property type="match status" value="1"/>
</dbReference>
<dbReference type="FunFam" id="3.30.230.10:FF:000002">
    <property type="entry name" value="30S ribosomal protein S5"/>
    <property type="match status" value="1"/>
</dbReference>
<dbReference type="Gene3D" id="3.30.160.20">
    <property type="match status" value="1"/>
</dbReference>
<dbReference type="Gene3D" id="3.30.230.10">
    <property type="match status" value="1"/>
</dbReference>
<dbReference type="HAMAP" id="MF_01307_B">
    <property type="entry name" value="Ribosomal_uS5_B"/>
    <property type="match status" value="1"/>
</dbReference>
<dbReference type="InterPro" id="IPR020568">
    <property type="entry name" value="Ribosomal_Su5_D2-typ_SF"/>
</dbReference>
<dbReference type="InterPro" id="IPR000851">
    <property type="entry name" value="Ribosomal_uS5"/>
</dbReference>
<dbReference type="InterPro" id="IPR005712">
    <property type="entry name" value="Ribosomal_uS5_bac-type"/>
</dbReference>
<dbReference type="InterPro" id="IPR005324">
    <property type="entry name" value="Ribosomal_uS5_C"/>
</dbReference>
<dbReference type="InterPro" id="IPR013810">
    <property type="entry name" value="Ribosomal_uS5_N"/>
</dbReference>
<dbReference type="InterPro" id="IPR018192">
    <property type="entry name" value="Ribosomal_uS5_N_CS"/>
</dbReference>
<dbReference type="InterPro" id="IPR014721">
    <property type="entry name" value="Ribsml_uS5_D2-typ_fold_subgr"/>
</dbReference>
<dbReference type="NCBIfam" id="TIGR01021">
    <property type="entry name" value="rpsE_bact"/>
    <property type="match status" value="1"/>
</dbReference>
<dbReference type="PANTHER" id="PTHR48277">
    <property type="entry name" value="MITOCHONDRIAL RIBOSOMAL PROTEIN S5"/>
    <property type="match status" value="1"/>
</dbReference>
<dbReference type="PANTHER" id="PTHR48277:SF1">
    <property type="entry name" value="MITOCHONDRIAL RIBOSOMAL PROTEIN S5"/>
    <property type="match status" value="1"/>
</dbReference>
<dbReference type="Pfam" id="PF00333">
    <property type="entry name" value="Ribosomal_S5"/>
    <property type="match status" value="1"/>
</dbReference>
<dbReference type="Pfam" id="PF03719">
    <property type="entry name" value="Ribosomal_S5_C"/>
    <property type="match status" value="1"/>
</dbReference>
<dbReference type="SUPFAM" id="SSF54768">
    <property type="entry name" value="dsRNA-binding domain-like"/>
    <property type="match status" value="1"/>
</dbReference>
<dbReference type="SUPFAM" id="SSF54211">
    <property type="entry name" value="Ribosomal protein S5 domain 2-like"/>
    <property type="match status" value="1"/>
</dbReference>
<dbReference type="PROSITE" id="PS00585">
    <property type="entry name" value="RIBOSOMAL_S5"/>
    <property type="match status" value="1"/>
</dbReference>
<dbReference type="PROSITE" id="PS50881">
    <property type="entry name" value="S5_DSRBD"/>
    <property type="match status" value="1"/>
</dbReference>
<accession>Q38US8</accession>
<protein>
    <recommendedName>
        <fullName evidence="1">Small ribosomal subunit protein uS5</fullName>
    </recommendedName>
    <alternativeName>
        <fullName evidence="2">30S ribosomal protein S5</fullName>
    </alternativeName>
</protein>
<feature type="chain" id="PRO_0000230348" description="Small ribosomal subunit protein uS5">
    <location>
        <begin position="1"/>
        <end position="166"/>
    </location>
</feature>
<feature type="domain" description="S5 DRBM" evidence="1">
    <location>
        <begin position="11"/>
        <end position="74"/>
    </location>
</feature>
<name>RS5_LATSS</name>
<gene>
    <name evidence="1" type="primary">rpsE</name>
    <name type="ordered locus">LCA_1748</name>
</gene>
<keyword id="KW-1185">Reference proteome</keyword>
<keyword id="KW-0687">Ribonucleoprotein</keyword>
<keyword id="KW-0689">Ribosomal protein</keyword>
<keyword id="KW-0694">RNA-binding</keyword>
<keyword id="KW-0699">rRNA-binding</keyword>
<sequence length="166" mass="17616">MTYIDPTHLDLEDRVVSINRVTKVVKGGRRLRFAAIVIVGDKNGHVGFGTGKAQEVPEAIRKAVEDAKKNLINVPKVGTTLPHEVIGRFGAGRVLLKPAVEGSGIAAGGAVRAVMELAGIDDVTSKTLGSKTAINVIRATIDGLTRMKTAEQIAELRNISVESLQN</sequence>
<comment type="function">
    <text evidence="1">With S4 and S12 plays an important role in translational accuracy.</text>
</comment>
<comment type="function">
    <text evidence="1">Located at the back of the 30S subunit body where it stabilizes the conformation of the head with respect to the body.</text>
</comment>
<comment type="subunit">
    <text evidence="1">Part of the 30S ribosomal subunit. Contacts proteins S4 and S8.</text>
</comment>
<comment type="domain">
    <text>The N-terminal domain interacts with the head of the 30S subunit; the C-terminal domain interacts with the body and contacts protein S4. The interaction surface between S4 and S5 is involved in control of translational fidelity.</text>
</comment>
<comment type="similarity">
    <text evidence="1">Belongs to the universal ribosomal protein uS5 family.</text>
</comment>
<organism>
    <name type="scientific">Latilactobacillus sakei subsp. sakei (strain 23K)</name>
    <name type="common">Lactobacillus sakei subsp. sakei</name>
    <dbReference type="NCBI Taxonomy" id="314315"/>
    <lineage>
        <taxon>Bacteria</taxon>
        <taxon>Bacillati</taxon>
        <taxon>Bacillota</taxon>
        <taxon>Bacilli</taxon>
        <taxon>Lactobacillales</taxon>
        <taxon>Lactobacillaceae</taxon>
        <taxon>Latilactobacillus</taxon>
    </lineage>
</organism>
<reference key="1">
    <citation type="journal article" date="2005" name="Nat. Biotechnol.">
        <title>The complete genome sequence of the meat-borne lactic acid bacterium Lactobacillus sakei 23K.</title>
        <authorList>
            <person name="Chaillou S."/>
            <person name="Champomier-Verges M.-C."/>
            <person name="Cornet M."/>
            <person name="Crutz-Le Coq A.-M."/>
            <person name="Dudez A.-M."/>
            <person name="Martin V."/>
            <person name="Beaufils S."/>
            <person name="Darbon-Rongere E."/>
            <person name="Bossy R."/>
            <person name="Loux V."/>
            <person name="Zagorec M."/>
        </authorList>
    </citation>
    <scope>NUCLEOTIDE SEQUENCE [LARGE SCALE GENOMIC DNA]</scope>
    <source>
        <strain>23K</strain>
    </source>
</reference>